<proteinExistence type="inferred from homology"/>
<reference key="1">
    <citation type="journal article" date="2004" name="Nucleic Acids Res.">
        <title>Whole genome comparisons of serotype 4b and 1/2a strains of the food-borne pathogen Listeria monocytogenes reveal new insights into the core genome components of this species.</title>
        <authorList>
            <person name="Nelson K.E."/>
            <person name="Fouts D.E."/>
            <person name="Mongodin E.F."/>
            <person name="Ravel J."/>
            <person name="DeBoy R.T."/>
            <person name="Kolonay J.F."/>
            <person name="Rasko D.A."/>
            <person name="Angiuoli S.V."/>
            <person name="Gill S.R."/>
            <person name="Paulsen I.T."/>
            <person name="Peterson J.D."/>
            <person name="White O."/>
            <person name="Nelson W.C."/>
            <person name="Nierman W.C."/>
            <person name="Beanan M.J."/>
            <person name="Brinkac L.M."/>
            <person name="Daugherty S.C."/>
            <person name="Dodson R.J."/>
            <person name="Durkin A.S."/>
            <person name="Madupu R."/>
            <person name="Haft D.H."/>
            <person name="Selengut J."/>
            <person name="Van Aken S.E."/>
            <person name="Khouri H.M."/>
            <person name="Fedorova N."/>
            <person name="Forberger H.A."/>
            <person name="Tran B."/>
            <person name="Kathariou S."/>
            <person name="Wonderling L.D."/>
            <person name="Uhlich G.A."/>
            <person name="Bayles D.O."/>
            <person name="Luchansky J.B."/>
            <person name="Fraser C.M."/>
        </authorList>
    </citation>
    <scope>NUCLEOTIDE SEQUENCE [LARGE SCALE GENOMIC DNA]</scope>
    <source>
        <strain>F2365</strain>
    </source>
</reference>
<gene>
    <name evidence="1" type="primary">thrS</name>
    <name type="ordered locus">LMOf2365_1580</name>
</gene>
<dbReference type="EC" id="6.1.1.3" evidence="1"/>
<dbReference type="EMBL" id="AE017262">
    <property type="protein sequence ID" value="AAT04355.1"/>
    <property type="molecule type" value="Genomic_DNA"/>
</dbReference>
<dbReference type="RefSeq" id="WP_003725686.1">
    <property type="nucleotide sequence ID" value="NC_002973.6"/>
</dbReference>
<dbReference type="SMR" id="Q71ZA9"/>
<dbReference type="KEGG" id="lmf:LMOf2365_1580"/>
<dbReference type="HOGENOM" id="CLU_008554_0_1_9"/>
<dbReference type="GO" id="GO:0005737">
    <property type="term" value="C:cytoplasm"/>
    <property type="evidence" value="ECO:0007669"/>
    <property type="project" value="UniProtKB-SubCell"/>
</dbReference>
<dbReference type="GO" id="GO:0005524">
    <property type="term" value="F:ATP binding"/>
    <property type="evidence" value="ECO:0007669"/>
    <property type="project" value="UniProtKB-UniRule"/>
</dbReference>
<dbReference type="GO" id="GO:0140096">
    <property type="term" value="F:catalytic activity, acting on a protein"/>
    <property type="evidence" value="ECO:0007669"/>
    <property type="project" value="UniProtKB-ARBA"/>
</dbReference>
<dbReference type="GO" id="GO:0046872">
    <property type="term" value="F:metal ion binding"/>
    <property type="evidence" value="ECO:0007669"/>
    <property type="project" value="UniProtKB-KW"/>
</dbReference>
<dbReference type="GO" id="GO:0004829">
    <property type="term" value="F:threonine-tRNA ligase activity"/>
    <property type="evidence" value="ECO:0007669"/>
    <property type="project" value="UniProtKB-UniRule"/>
</dbReference>
<dbReference type="GO" id="GO:0016740">
    <property type="term" value="F:transferase activity"/>
    <property type="evidence" value="ECO:0007669"/>
    <property type="project" value="UniProtKB-ARBA"/>
</dbReference>
<dbReference type="GO" id="GO:0000049">
    <property type="term" value="F:tRNA binding"/>
    <property type="evidence" value="ECO:0007669"/>
    <property type="project" value="UniProtKB-KW"/>
</dbReference>
<dbReference type="GO" id="GO:0006435">
    <property type="term" value="P:threonyl-tRNA aminoacylation"/>
    <property type="evidence" value="ECO:0007669"/>
    <property type="project" value="UniProtKB-UniRule"/>
</dbReference>
<dbReference type="CDD" id="cd01667">
    <property type="entry name" value="TGS_ThrRS"/>
    <property type="match status" value="1"/>
</dbReference>
<dbReference type="CDD" id="cd00860">
    <property type="entry name" value="ThrRS_anticodon"/>
    <property type="match status" value="1"/>
</dbReference>
<dbReference type="CDD" id="cd00771">
    <property type="entry name" value="ThrRS_core"/>
    <property type="match status" value="1"/>
</dbReference>
<dbReference type="FunFam" id="3.10.20.30:FF:000005">
    <property type="entry name" value="Threonine--tRNA ligase"/>
    <property type="match status" value="1"/>
</dbReference>
<dbReference type="FunFam" id="3.30.54.20:FF:000002">
    <property type="entry name" value="Threonine--tRNA ligase"/>
    <property type="match status" value="1"/>
</dbReference>
<dbReference type="FunFam" id="3.30.930.10:FF:000002">
    <property type="entry name" value="Threonine--tRNA ligase"/>
    <property type="match status" value="1"/>
</dbReference>
<dbReference type="FunFam" id="3.40.50.800:FF:000001">
    <property type="entry name" value="Threonine--tRNA ligase"/>
    <property type="match status" value="1"/>
</dbReference>
<dbReference type="FunFam" id="3.30.980.10:FF:000005">
    <property type="entry name" value="Threonyl-tRNA synthetase, mitochondrial"/>
    <property type="match status" value="1"/>
</dbReference>
<dbReference type="Gene3D" id="3.10.20.30">
    <property type="match status" value="1"/>
</dbReference>
<dbReference type="Gene3D" id="3.30.54.20">
    <property type="match status" value="1"/>
</dbReference>
<dbReference type="Gene3D" id="3.40.50.800">
    <property type="entry name" value="Anticodon-binding domain"/>
    <property type="match status" value="1"/>
</dbReference>
<dbReference type="Gene3D" id="3.30.930.10">
    <property type="entry name" value="Bira Bifunctional Protein, Domain 2"/>
    <property type="match status" value="1"/>
</dbReference>
<dbReference type="Gene3D" id="3.30.980.10">
    <property type="entry name" value="Threonyl-trna Synthetase, Chain A, domain 2"/>
    <property type="match status" value="1"/>
</dbReference>
<dbReference type="HAMAP" id="MF_00184">
    <property type="entry name" value="Thr_tRNA_synth"/>
    <property type="match status" value="1"/>
</dbReference>
<dbReference type="InterPro" id="IPR002314">
    <property type="entry name" value="aa-tRNA-synt_IIb"/>
</dbReference>
<dbReference type="InterPro" id="IPR006195">
    <property type="entry name" value="aa-tRNA-synth_II"/>
</dbReference>
<dbReference type="InterPro" id="IPR045864">
    <property type="entry name" value="aa-tRNA-synth_II/BPL/LPL"/>
</dbReference>
<dbReference type="InterPro" id="IPR004154">
    <property type="entry name" value="Anticodon-bd"/>
</dbReference>
<dbReference type="InterPro" id="IPR036621">
    <property type="entry name" value="Anticodon-bd_dom_sf"/>
</dbReference>
<dbReference type="InterPro" id="IPR012675">
    <property type="entry name" value="Beta-grasp_dom_sf"/>
</dbReference>
<dbReference type="InterPro" id="IPR004095">
    <property type="entry name" value="TGS"/>
</dbReference>
<dbReference type="InterPro" id="IPR012676">
    <property type="entry name" value="TGS-like"/>
</dbReference>
<dbReference type="InterPro" id="IPR002320">
    <property type="entry name" value="Thr-tRNA-ligase_IIa"/>
</dbReference>
<dbReference type="InterPro" id="IPR018163">
    <property type="entry name" value="Thr/Ala-tRNA-synth_IIc_edit"/>
</dbReference>
<dbReference type="InterPro" id="IPR047246">
    <property type="entry name" value="ThrRS_anticodon"/>
</dbReference>
<dbReference type="InterPro" id="IPR033728">
    <property type="entry name" value="ThrRS_core"/>
</dbReference>
<dbReference type="InterPro" id="IPR012947">
    <property type="entry name" value="tRNA_SAD"/>
</dbReference>
<dbReference type="NCBIfam" id="TIGR00418">
    <property type="entry name" value="thrS"/>
    <property type="match status" value="1"/>
</dbReference>
<dbReference type="PANTHER" id="PTHR11451:SF56">
    <property type="entry name" value="THREONINE--TRNA LIGASE 1"/>
    <property type="match status" value="1"/>
</dbReference>
<dbReference type="PANTHER" id="PTHR11451">
    <property type="entry name" value="THREONINE-TRNA LIGASE"/>
    <property type="match status" value="1"/>
</dbReference>
<dbReference type="Pfam" id="PF03129">
    <property type="entry name" value="HGTP_anticodon"/>
    <property type="match status" value="1"/>
</dbReference>
<dbReference type="Pfam" id="PF02824">
    <property type="entry name" value="TGS"/>
    <property type="match status" value="1"/>
</dbReference>
<dbReference type="Pfam" id="PF00587">
    <property type="entry name" value="tRNA-synt_2b"/>
    <property type="match status" value="1"/>
</dbReference>
<dbReference type="Pfam" id="PF07973">
    <property type="entry name" value="tRNA_SAD"/>
    <property type="match status" value="1"/>
</dbReference>
<dbReference type="PRINTS" id="PR01047">
    <property type="entry name" value="TRNASYNTHTHR"/>
</dbReference>
<dbReference type="SMART" id="SM00863">
    <property type="entry name" value="tRNA_SAD"/>
    <property type="match status" value="1"/>
</dbReference>
<dbReference type="SUPFAM" id="SSF52954">
    <property type="entry name" value="Class II aaRS ABD-related"/>
    <property type="match status" value="1"/>
</dbReference>
<dbReference type="SUPFAM" id="SSF55681">
    <property type="entry name" value="Class II aaRS and biotin synthetases"/>
    <property type="match status" value="1"/>
</dbReference>
<dbReference type="SUPFAM" id="SSF81271">
    <property type="entry name" value="TGS-like"/>
    <property type="match status" value="1"/>
</dbReference>
<dbReference type="SUPFAM" id="SSF55186">
    <property type="entry name" value="ThrRS/AlaRS common domain"/>
    <property type="match status" value="1"/>
</dbReference>
<dbReference type="PROSITE" id="PS50862">
    <property type="entry name" value="AA_TRNA_LIGASE_II"/>
    <property type="match status" value="1"/>
</dbReference>
<dbReference type="PROSITE" id="PS51880">
    <property type="entry name" value="TGS"/>
    <property type="match status" value="1"/>
</dbReference>
<feature type="chain" id="PRO_0000101003" description="Threonine--tRNA ligase">
    <location>
        <begin position="1"/>
        <end position="640"/>
    </location>
</feature>
<feature type="domain" description="TGS" evidence="2">
    <location>
        <begin position="1"/>
        <end position="60"/>
    </location>
</feature>
<feature type="region of interest" description="Catalytic" evidence="1">
    <location>
        <begin position="241"/>
        <end position="538"/>
    </location>
</feature>
<feature type="binding site" evidence="1">
    <location>
        <position position="334"/>
    </location>
    <ligand>
        <name>Zn(2+)</name>
        <dbReference type="ChEBI" id="CHEBI:29105"/>
    </ligand>
</feature>
<feature type="binding site" evidence="1">
    <location>
        <position position="385"/>
    </location>
    <ligand>
        <name>Zn(2+)</name>
        <dbReference type="ChEBI" id="CHEBI:29105"/>
    </ligand>
</feature>
<feature type="binding site" evidence="1">
    <location>
        <position position="515"/>
    </location>
    <ligand>
        <name>Zn(2+)</name>
        <dbReference type="ChEBI" id="CHEBI:29105"/>
    </ligand>
</feature>
<sequence length="640" mass="73224">MKITFPDGAVKEFEPGVSTADIAASISPGLKKKALAGKLNGELLDLVTPIHEDGAIEIVTPDHEDALGILRHSTAHLMAQALKRLYPDVKFGVGPAIESGFYYDIDTEAVISDESLVEIEKEMQKIVRENVPIEREVVSREEAIKRFKAIGDQYKLELIEAIPEDETVTIYTQGEFFDLCRGVHVPSTGKIQVFKLLSVAGAYWRGDSNNKMLQRIYGTAFFDKNGLKEFIQMQKEAKERDHRKLGKELDLFANSIEVGQGLPLWLPKGATIRRVIERYIVDKEERLGYNHVYTPIMANVELYKTSGHWDHYHEDMFPTMKMDNEELVLRPMNCPHHMMIYKNDIHSYRELPIRIAELGMMHRYEMSGALSGLQRVRGMTLNDAHVFVRPDQIKDEFKRVVELILEVYKDFDIKDYSFRLSYRDPKNTEKYFDDDAMWEKAQAMLKSAMDEMEMDYFEAEGEAAFYGPKLDVQVKTAIGKEETLSTVQLDFLLPERFDLTYIGEDGEKHRPVVIHRGVVSTMERFVAYLIEEYKGAFPTWLAPVQMELIPVNADAHLDYAKGVQDKLQRAGLRAEVDDRNEKLGYKIREAQTKKIPYALVLGDQEVEAGSVNVRRYGSKDSETMDLDAFIAQVVAEVSKY</sequence>
<accession>Q71ZA9</accession>
<name>SYT_LISMF</name>
<protein>
    <recommendedName>
        <fullName evidence="1">Threonine--tRNA ligase</fullName>
        <ecNumber evidence="1">6.1.1.3</ecNumber>
    </recommendedName>
    <alternativeName>
        <fullName evidence="1">Threonyl-tRNA synthetase</fullName>
        <shortName evidence="1">ThrRS</shortName>
    </alternativeName>
</protein>
<evidence type="ECO:0000255" key="1">
    <source>
        <dbReference type="HAMAP-Rule" id="MF_00184"/>
    </source>
</evidence>
<evidence type="ECO:0000255" key="2">
    <source>
        <dbReference type="PROSITE-ProRule" id="PRU01228"/>
    </source>
</evidence>
<keyword id="KW-0030">Aminoacyl-tRNA synthetase</keyword>
<keyword id="KW-0067">ATP-binding</keyword>
<keyword id="KW-0963">Cytoplasm</keyword>
<keyword id="KW-0436">Ligase</keyword>
<keyword id="KW-0479">Metal-binding</keyword>
<keyword id="KW-0547">Nucleotide-binding</keyword>
<keyword id="KW-0648">Protein biosynthesis</keyword>
<keyword id="KW-0694">RNA-binding</keyword>
<keyword id="KW-0820">tRNA-binding</keyword>
<keyword id="KW-0862">Zinc</keyword>
<comment type="function">
    <text evidence="1">Catalyzes the attachment of threonine to tRNA(Thr) in a two-step reaction: L-threonine is first activated by ATP to form Thr-AMP and then transferred to the acceptor end of tRNA(Thr). Also edits incorrectly charged L-seryl-tRNA(Thr).</text>
</comment>
<comment type="catalytic activity">
    <reaction evidence="1">
        <text>tRNA(Thr) + L-threonine + ATP = L-threonyl-tRNA(Thr) + AMP + diphosphate + H(+)</text>
        <dbReference type="Rhea" id="RHEA:24624"/>
        <dbReference type="Rhea" id="RHEA-COMP:9670"/>
        <dbReference type="Rhea" id="RHEA-COMP:9704"/>
        <dbReference type="ChEBI" id="CHEBI:15378"/>
        <dbReference type="ChEBI" id="CHEBI:30616"/>
        <dbReference type="ChEBI" id="CHEBI:33019"/>
        <dbReference type="ChEBI" id="CHEBI:57926"/>
        <dbReference type="ChEBI" id="CHEBI:78442"/>
        <dbReference type="ChEBI" id="CHEBI:78534"/>
        <dbReference type="ChEBI" id="CHEBI:456215"/>
        <dbReference type="EC" id="6.1.1.3"/>
    </reaction>
</comment>
<comment type="cofactor">
    <cofactor evidence="1">
        <name>Zn(2+)</name>
        <dbReference type="ChEBI" id="CHEBI:29105"/>
    </cofactor>
    <text evidence="1">Binds 1 zinc ion per subunit.</text>
</comment>
<comment type="subunit">
    <text evidence="1">Homodimer.</text>
</comment>
<comment type="subcellular location">
    <subcellularLocation>
        <location evidence="1">Cytoplasm</location>
    </subcellularLocation>
</comment>
<comment type="similarity">
    <text evidence="1">Belongs to the class-II aminoacyl-tRNA synthetase family.</text>
</comment>
<organism>
    <name type="scientific">Listeria monocytogenes serotype 4b (strain F2365)</name>
    <dbReference type="NCBI Taxonomy" id="265669"/>
    <lineage>
        <taxon>Bacteria</taxon>
        <taxon>Bacillati</taxon>
        <taxon>Bacillota</taxon>
        <taxon>Bacilli</taxon>
        <taxon>Bacillales</taxon>
        <taxon>Listeriaceae</taxon>
        <taxon>Listeria</taxon>
    </lineage>
</organism>